<sequence length="97" mass="11205">MSLLTEVETPIRNEWGCRCNDSSDPLVVAANIIGILHLILWILDRLFFKCIYRLFKHGLKRGPSTEGVPESMREEYRKEQQSAVDADDSHFVNIELE</sequence>
<name>M2_I45A0</name>
<dbReference type="EMBL" id="CY021710">
    <property type="protein sequence ID" value="ABP49329.1"/>
    <property type="molecule type" value="Viral_cRNA"/>
</dbReference>
<dbReference type="BMRB" id="A4U6V3"/>
<dbReference type="SMR" id="A4U6V3"/>
<dbReference type="GlyCosmos" id="A4U6V3">
    <property type="glycosylation" value="1 site, No reported glycans"/>
</dbReference>
<dbReference type="Proteomes" id="UP000008433">
    <property type="component" value="Genome"/>
</dbReference>
<dbReference type="GO" id="GO:0020002">
    <property type="term" value="C:host cell plasma membrane"/>
    <property type="evidence" value="ECO:0007669"/>
    <property type="project" value="UniProtKB-SubCell"/>
</dbReference>
<dbReference type="GO" id="GO:0016020">
    <property type="term" value="C:membrane"/>
    <property type="evidence" value="ECO:0007669"/>
    <property type="project" value="UniProtKB-UniRule"/>
</dbReference>
<dbReference type="GO" id="GO:0055036">
    <property type="term" value="C:virion membrane"/>
    <property type="evidence" value="ECO:0007669"/>
    <property type="project" value="UniProtKB-SubCell"/>
</dbReference>
<dbReference type="GO" id="GO:0005216">
    <property type="term" value="F:monoatomic ion channel activity"/>
    <property type="evidence" value="ECO:0007669"/>
    <property type="project" value="UniProtKB-UniRule"/>
</dbReference>
<dbReference type="GO" id="GO:0015078">
    <property type="term" value="F:proton transmembrane transporter activity"/>
    <property type="evidence" value="ECO:0007669"/>
    <property type="project" value="UniProtKB-UniRule"/>
</dbReference>
<dbReference type="GO" id="GO:0051259">
    <property type="term" value="P:protein complex oligomerization"/>
    <property type="evidence" value="ECO:0007669"/>
    <property type="project" value="UniProtKB-UniRule"/>
</dbReference>
<dbReference type="GO" id="GO:0044694">
    <property type="term" value="P:symbiont genome entry into host cell via pore formation in plasma membrane"/>
    <property type="evidence" value="ECO:0007669"/>
    <property type="project" value="UniProtKB-UniRule"/>
</dbReference>
<dbReference type="GO" id="GO:0140321">
    <property type="term" value="P:symbiont-mediated suppression of host autophagy"/>
    <property type="evidence" value="ECO:0007669"/>
    <property type="project" value="UniProtKB-KW"/>
</dbReference>
<dbReference type="Gene3D" id="6.10.250.1640">
    <property type="match status" value="1"/>
</dbReference>
<dbReference type="HAMAP" id="MF_04069">
    <property type="entry name" value="INFV_M2"/>
    <property type="match status" value="1"/>
</dbReference>
<dbReference type="InterPro" id="IPR002089">
    <property type="entry name" value="Flu_M2"/>
</dbReference>
<dbReference type="Pfam" id="PF00599">
    <property type="entry name" value="Flu_M2"/>
    <property type="match status" value="1"/>
</dbReference>
<feature type="chain" id="PRO_0000372922" description="Matrix protein 2">
    <location>
        <begin position="1"/>
        <end position="97"/>
    </location>
</feature>
<feature type="topological domain" description="Virion surface" evidence="1">
    <location>
        <begin position="1"/>
        <end position="22"/>
    </location>
</feature>
<feature type="transmembrane region" description="Helical; Signal-anchor for type III membrane protein" evidence="1">
    <location>
        <begin position="23"/>
        <end position="43"/>
    </location>
</feature>
<feature type="topological domain" description="Intravirion" evidence="1">
    <location>
        <begin position="44"/>
        <end position="97"/>
    </location>
</feature>
<feature type="region of interest" description="Disordered" evidence="2">
    <location>
        <begin position="59"/>
        <end position="85"/>
    </location>
</feature>
<feature type="compositionally biased region" description="Basic and acidic residues" evidence="2">
    <location>
        <begin position="71"/>
        <end position="80"/>
    </location>
</feature>
<feature type="site" description="Essential for channel activity, possibly by being protonated during channel activation, and by forming the channel gate and the selective filter" evidence="1">
    <location>
        <position position="37"/>
    </location>
</feature>
<feature type="site" description="Seems to be involved in pH gating" evidence="1">
    <location>
        <position position="41"/>
    </location>
</feature>
<feature type="modified residue" description="Phosphoserine; by host" evidence="1">
    <location>
        <position position="64"/>
    </location>
</feature>
<feature type="modified residue" description="Phosphoserine; by host" evidence="1">
    <location>
        <position position="82"/>
    </location>
</feature>
<feature type="lipid moiety-binding region" description="S-palmitoyl cysteine; by host" evidence="1">
    <location>
        <position position="50"/>
    </location>
</feature>
<feature type="glycosylation site" description="N-linked (GlcNAc...) asparagine; by host" evidence="1">
    <location>
        <position position="20"/>
    </location>
</feature>
<feature type="disulfide bond" description="Interchain (with C-17)" evidence="1">
    <location>
        <position position="17"/>
    </location>
</feature>
<feature type="disulfide bond" description="Interchain (with C-19)" evidence="1">
    <location>
        <position position="19"/>
    </location>
</feature>
<gene>
    <name evidence="1" type="primary">M</name>
    <name type="synonym">M2</name>
</gene>
<organism>
    <name type="scientific">Influenza A virus (strain A/USA:Huston/AA/1945 H1N1)</name>
    <dbReference type="NCBI Taxonomy" id="425551"/>
    <lineage>
        <taxon>Viruses</taxon>
        <taxon>Riboviria</taxon>
        <taxon>Orthornavirae</taxon>
        <taxon>Negarnaviricota</taxon>
        <taxon>Polyploviricotina</taxon>
        <taxon>Insthoviricetes</taxon>
        <taxon>Articulavirales</taxon>
        <taxon>Orthomyxoviridae</taxon>
        <taxon>Alphainfluenzavirus</taxon>
        <taxon>Alphainfluenzavirus influenzae</taxon>
        <taxon>Influenza A virus</taxon>
    </lineage>
</organism>
<evidence type="ECO:0000255" key="1">
    <source>
        <dbReference type="HAMAP-Rule" id="MF_04069"/>
    </source>
</evidence>
<evidence type="ECO:0000256" key="2">
    <source>
        <dbReference type="SAM" id="MobiDB-lite"/>
    </source>
</evidence>
<proteinExistence type="inferred from homology"/>
<keyword id="KW-0025">Alternative splicing</keyword>
<keyword id="KW-1015">Disulfide bond</keyword>
<keyword id="KW-0325">Glycoprotein</keyword>
<keyword id="KW-1032">Host cell membrane</keyword>
<keyword id="KW-1043">Host membrane</keyword>
<keyword id="KW-0945">Host-virus interaction</keyword>
<keyword id="KW-0375">Hydrogen ion transport</keyword>
<keyword id="KW-1083">Inhibition of host autophagy by virus</keyword>
<keyword id="KW-0407">Ion channel</keyword>
<keyword id="KW-0406">Ion transport</keyword>
<keyword id="KW-0449">Lipoprotein</keyword>
<keyword id="KW-0472">Membrane</keyword>
<keyword id="KW-0564">Palmitate</keyword>
<keyword id="KW-0597">Phosphoprotein</keyword>
<keyword id="KW-0735">Signal-anchor</keyword>
<keyword id="KW-0812">Transmembrane</keyword>
<keyword id="KW-1133">Transmembrane helix</keyword>
<keyword id="KW-0813">Transport</keyword>
<keyword id="KW-1182">Viral ion channel</keyword>
<keyword id="KW-0946">Virion</keyword>
<comment type="function">
    <text evidence="1">Forms a proton-selective ion channel that is necessary for the efficient release of the viral genome during virus entry. After attaching to the cell surface, the virion enters the cell by endocytosis. Acidification of the endosome triggers M2 ion channel activity. The influx of protons into virion interior is believed to disrupt interactions between the viral ribonucleoprotein (RNP), matrix protein 1 (M1), and lipid bilayers, thereby freeing the viral genome from interaction with viral proteins and enabling RNA segments to migrate to the host cell nucleus, where influenza virus RNA transcription and replication occur. Also plays a role in viral proteins secretory pathway. Elevates the intravesicular pH of normally acidic compartments, such as trans-Golgi network, preventing newly formed hemagglutinin from premature switching to the fusion-active conformation.</text>
</comment>
<comment type="activity regulation">
    <text>The M2 protein from most influenza A strains is inhibited by amantadine and rimantadine, resulting in viral uncoating incapacity. Emergence of amantadine-resistant variants is usually rapid.</text>
</comment>
<comment type="subunit">
    <text evidence="1">Homotetramer; composed of two disulfide-linked dimers held together by non-covalent interactions. May interact with matrix protein 1.</text>
</comment>
<comment type="subcellular location">
    <subcellularLocation>
        <location evidence="1">Virion membrane</location>
    </subcellularLocation>
    <subcellularLocation>
        <location evidence="1">Host apical cell membrane</location>
        <topology evidence="1">Single-pass type III membrane protein</topology>
    </subcellularLocation>
    <text evidence="1">Abundantly expressed at the apical plasma membrane in infected polarized epithelial cells, in close proximity to budding and assembled virions. Minor component of virions (only 16-20 molecules/virion).</text>
</comment>
<comment type="alternative products">
    <event type="alternative splicing"/>
    <isoform>
        <id>A4U6V3-1</id>
        <name>M2</name>
        <sequence type="displayed"/>
    </isoform>
    <isoform>
        <id>A4U6V4-1</id>
        <name>M1</name>
        <sequence type="external"/>
    </isoform>
    <text>Only the first 9 residues are shared by the 2 isoforms.</text>
</comment>
<comment type="domain">
    <text evidence="1">Cytoplasmic tail plays an important role in virion assembly and morphogenesis.</text>
</comment>
<comment type="miscellaneous">
    <text evidence="1">When the channel is activated, one or more imidazole moieties of His-37 probably become bi-protonated.</text>
</comment>
<comment type="similarity">
    <text evidence="1">Belongs to the influenza viruses matrix protein M2 family.</text>
</comment>
<reference key="1">
    <citation type="submission" date="2007-04" db="EMBL/GenBank/DDBJ databases">
        <title>The NIAID influenza genome sequencing project.</title>
        <authorList>
            <person name="Ghedin E."/>
            <person name="Spiro D."/>
            <person name="Miller N."/>
            <person name="Zaborsky J."/>
            <person name="Feldblyum T."/>
            <person name="Subbu V."/>
            <person name="Shumway M."/>
            <person name="Sparenborg J."/>
            <person name="Groveman L."/>
            <person name="Halpin R."/>
            <person name="Sitz J."/>
            <person name="Koo H."/>
            <person name="Salzberg S.L."/>
            <person name="Webster R.G."/>
            <person name="Hoffmann E."/>
            <person name="Krauss S."/>
            <person name="Naeve C."/>
            <person name="Bao Y."/>
            <person name="Bolotov P."/>
            <person name="Dernovoy D."/>
            <person name="Kiryutin B."/>
            <person name="Lipman D.J."/>
            <person name="Tatusova T."/>
        </authorList>
    </citation>
    <scope>NUCLEOTIDE SEQUENCE [GENOMIC RNA]</scope>
</reference>
<reference key="2">
    <citation type="submission" date="2007-04" db="EMBL/GenBank/DDBJ databases">
        <authorList>
            <consortium name="The NIAID Influenza Genome Sequencing Consortium"/>
        </authorList>
    </citation>
    <scope>NUCLEOTIDE SEQUENCE [GENOMIC RNA]</scope>
</reference>
<accession>A4U6V3</accession>
<protein>
    <recommendedName>
        <fullName evidence="1">Matrix protein 2</fullName>
    </recommendedName>
    <alternativeName>
        <fullName evidence="1">Proton channel protein M2</fullName>
    </alternativeName>
</protein>
<organismHost>
    <name type="scientific">Aves</name>
    <dbReference type="NCBI Taxonomy" id="8782"/>
</organismHost>
<organismHost>
    <name type="scientific">Homo sapiens</name>
    <name type="common">Human</name>
    <dbReference type="NCBI Taxonomy" id="9606"/>
</organismHost>
<organismHost>
    <name type="scientific">Sus scrofa</name>
    <name type="common">Pig</name>
    <dbReference type="NCBI Taxonomy" id="9823"/>
</organismHost>